<sequence>MILSGKEILKHIGEDIIIEPFSEERINPNSYNLTLFNELLVYKNDTLDMKIPNETEKLIIPEEGLLLEPGKLYLGRTNEFTQTNKYVPMLEGRSSTGRLGLFIHVTAGFGDIGFAGYWTLEIFCVQPIRIYPNTEICQIYYHNIDGEYDLYNSGKYQNNNGIQPSLMYKDFEK</sequence>
<keyword id="KW-0378">Hydrolase</keyword>
<keyword id="KW-0546">Nucleotide metabolism</keyword>
<keyword id="KW-0547">Nucleotide-binding</keyword>
<evidence type="ECO:0000255" key="1">
    <source>
        <dbReference type="HAMAP-Rule" id="MF_00146"/>
    </source>
</evidence>
<reference key="1">
    <citation type="submission" date="2008-05" db="EMBL/GenBank/DDBJ databases">
        <title>Complete genome sequence of Clostridium botulinum E3 str. Alaska E43.</title>
        <authorList>
            <person name="Brinkac L.M."/>
            <person name="Brown J.L."/>
            <person name="Bruce D."/>
            <person name="Detter C."/>
            <person name="Munk C."/>
            <person name="Smith L.A."/>
            <person name="Smith T.J."/>
            <person name="Sutton G."/>
            <person name="Brettin T.S."/>
        </authorList>
    </citation>
    <scope>NUCLEOTIDE SEQUENCE [LARGE SCALE GENOMIC DNA]</scope>
    <source>
        <strain>Alaska E43 / Type E3</strain>
    </source>
</reference>
<protein>
    <recommendedName>
        <fullName evidence="1">dCTP deaminase, dUMP-forming</fullName>
        <ecNumber evidence="1">3.5.4.30</ecNumber>
    </recommendedName>
    <alternativeName>
        <fullName evidence="1">Bifunctional dCTP deaminase:dUTPase</fullName>
    </alternativeName>
    <alternativeName>
        <fullName evidence="1">DCD-DUT</fullName>
    </alternativeName>
</protein>
<feature type="chain" id="PRO_1000189824" description="dCTP deaminase, dUMP-forming">
    <location>
        <begin position="1"/>
        <end position="173"/>
    </location>
</feature>
<feature type="active site" description="Proton donor/acceptor" evidence="1">
    <location>
        <position position="121"/>
    </location>
</feature>
<feature type="binding site" evidence="1">
    <location>
        <begin position="93"/>
        <end position="98"/>
    </location>
    <ligand>
        <name>dCTP</name>
        <dbReference type="ChEBI" id="CHEBI:61481"/>
    </ligand>
</feature>
<feature type="binding site" evidence="1">
    <location>
        <position position="111"/>
    </location>
    <ligand>
        <name>dCTP</name>
        <dbReference type="ChEBI" id="CHEBI:61481"/>
    </ligand>
</feature>
<feature type="binding site" evidence="1">
    <location>
        <begin position="119"/>
        <end position="121"/>
    </location>
    <ligand>
        <name>dCTP</name>
        <dbReference type="ChEBI" id="CHEBI:61481"/>
    </ligand>
</feature>
<feature type="binding site" evidence="1">
    <location>
        <position position="138"/>
    </location>
    <ligand>
        <name>dCTP</name>
        <dbReference type="ChEBI" id="CHEBI:61481"/>
    </ligand>
</feature>
<feature type="binding site" evidence="1">
    <location>
        <position position="151"/>
    </location>
    <ligand>
        <name>dCTP</name>
        <dbReference type="ChEBI" id="CHEBI:61481"/>
    </ligand>
</feature>
<feature type="site" description="Important for bifunctional activity" evidence="1">
    <location>
        <begin position="108"/>
        <end position="109"/>
    </location>
</feature>
<accession>B2UWE6</accession>
<dbReference type="EC" id="3.5.4.30" evidence="1"/>
<dbReference type="EMBL" id="CP001078">
    <property type="protein sequence ID" value="ACD52759.1"/>
    <property type="molecule type" value="Genomic_DNA"/>
</dbReference>
<dbReference type="RefSeq" id="WP_012450831.1">
    <property type="nucleotide sequence ID" value="NC_010723.1"/>
</dbReference>
<dbReference type="SMR" id="B2UWE6"/>
<dbReference type="KEGG" id="cbt:CLH_2400"/>
<dbReference type="HOGENOM" id="CLU_087476_0_1_9"/>
<dbReference type="UniPathway" id="UPA00610">
    <property type="reaction ID" value="UER00667"/>
</dbReference>
<dbReference type="GO" id="GO:0033973">
    <property type="term" value="F:dCTP deaminase (dUMP-forming) activity"/>
    <property type="evidence" value="ECO:0007669"/>
    <property type="project" value="UniProtKB-UniRule"/>
</dbReference>
<dbReference type="GO" id="GO:0008829">
    <property type="term" value="F:dCTP deaminase activity"/>
    <property type="evidence" value="ECO:0007669"/>
    <property type="project" value="InterPro"/>
</dbReference>
<dbReference type="GO" id="GO:0000166">
    <property type="term" value="F:nucleotide binding"/>
    <property type="evidence" value="ECO:0007669"/>
    <property type="project" value="UniProtKB-KW"/>
</dbReference>
<dbReference type="GO" id="GO:0006226">
    <property type="term" value="P:dUMP biosynthetic process"/>
    <property type="evidence" value="ECO:0007669"/>
    <property type="project" value="UniProtKB-UniRule"/>
</dbReference>
<dbReference type="GO" id="GO:0006229">
    <property type="term" value="P:dUTP biosynthetic process"/>
    <property type="evidence" value="ECO:0007669"/>
    <property type="project" value="InterPro"/>
</dbReference>
<dbReference type="GO" id="GO:0015949">
    <property type="term" value="P:nucleobase-containing small molecule interconversion"/>
    <property type="evidence" value="ECO:0007669"/>
    <property type="project" value="TreeGrafter"/>
</dbReference>
<dbReference type="CDD" id="cd07557">
    <property type="entry name" value="trimeric_dUTPase"/>
    <property type="match status" value="1"/>
</dbReference>
<dbReference type="Gene3D" id="2.70.40.10">
    <property type="match status" value="1"/>
</dbReference>
<dbReference type="HAMAP" id="MF_00146">
    <property type="entry name" value="dCTP_deaminase"/>
    <property type="match status" value="1"/>
</dbReference>
<dbReference type="InterPro" id="IPR011962">
    <property type="entry name" value="dCTP_deaminase"/>
</dbReference>
<dbReference type="InterPro" id="IPR036157">
    <property type="entry name" value="dUTPase-like_sf"/>
</dbReference>
<dbReference type="InterPro" id="IPR033704">
    <property type="entry name" value="dUTPase_trimeric"/>
</dbReference>
<dbReference type="NCBIfam" id="TIGR02274">
    <property type="entry name" value="dCTP_deam"/>
    <property type="match status" value="1"/>
</dbReference>
<dbReference type="PANTHER" id="PTHR42680">
    <property type="entry name" value="DCTP DEAMINASE"/>
    <property type="match status" value="1"/>
</dbReference>
<dbReference type="PANTHER" id="PTHR42680:SF3">
    <property type="entry name" value="DCTP DEAMINASE"/>
    <property type="match status" value="1"/>
</dbReference>
<dbReference type="Pfam" id="PF22769">
    <property type="entry name" value="DCD"/>
    <property type="match status" value="1"/>
</dbReference>
<dbReference type="SUPFAM" id="SSF51283">
    <property type="entry name" value="dUTPase-like"/>
    <property type="match status" value="1"/>
</dbReference>
<proteinExistence type="inferred from homology"/>
<organism>
    <name type="scientific">Clostridium botulinum (strain Alaska E43 / Type E3)</name>
    <dbReference type="NCBI Taxonomy" id="508767"/>
    <lineage>
        <taxon>Bacteria</taxon>
        <taxon>Bacillati</taxon>
        <taxon>Bacillota</taxon>
        <taxon>Clostridia</taxon>
        <taxon>Eubacteriales</taxon>
        <taxon>Clostridiaceae</taxon>
        <taxon>Clostridium</taxon>
    </lineage>
</organism>
<name>DCDB_CLOBA</name>
<comment type="function">
    <text evidence="1">Bifunctional enzyme that catalyzes both the deamination of dCTP to dUTP and the hydrolysis of dUTP to dUMP without releasing the toxic dUTP intermediate.</text>
</comment>
<comment type="catalytic activity">
    <reaction evidence="1">
        <text>dCTP + 2 H2O = dUMP + NH4(+) + diphosphate</text>
        <dbReference type="Rhea" id="RHEA:19205"/>
        <dbReference type="ChEBI" id="CHEBI:15377"/>
        <dbReference type="ChEBI" id="CHEBI:28938"/>
        <dbReference type="ChEBI" id="CHEBI:33019"/>
        <dbReference type="ChEBI" id="CHEBI:61481"/>
        <dbReference type="ChEBI" id="CHEBI:246422"/>
        <dbReference type="EC" id="3.5.4.30"/>
    </reaction>
</comment>
<comment type="pathway">
    <text evidence="1">Pyrimidine metabolism; dUMP biosynthesis; dUMP from dCTP: step 1/1.</text>
</comment>
<comment type="subunit">
    <text evidence="1">Homotrimer.</text>
</comment>
<comment type="similarity">
    <text evidence="1">Belongs to the dCTP deaminase family.</text>
</comment>
<gene>
    <name evidence="1" type="primary">dcd</name>
    <name type="ordered locus">CLH_2400</name>
</gene>